<protein>
    <recommendedName>
        <fullName>Mitogen-activated protein kinase homolog NTF6</fullName>
        <ecNumber>2.7.11.24</ecNumber>
    </recommendedName>
    <alternativeName>
        <fullName>P43</fullName>
    </alternativeName>
</protein>
<organism>
    <name type="scientific">Nicotiana tabacum</name>
    <name type="common">Common tobacco</name>
    <dbReference type="NCBI Taxonomy" id="4097"/>
    <lineage>
        <taxon>Eukaryota</taxon>
        <taxon>Viridiplantae</taxon>
        <taxon>Streptophyta</taxon>
        <taxon>Embryophyta</taxon>
        <taxon>Tracheophyta</taxon>
        <taxon>Spermatophyta</taxon>
        <taxon>Magnoliopsida</taxon>
        <taxon>eudicotyledons</taxon>
        <taxon>Gunneridae</taxon>
        <taxon>Pentapetalae</taxon>
        <taxon>asterids</taxon>
        <taxon>lamiids</taxon>
        <taxon>Solanales</taxon>
        <taxon>Solanaceae</taxon>
        <taxon>Nicotianoideae</taxon>
        <taxon>Nicotianeae</taxon>
        <taxon>Nicotiana</taxon>
    </lineage>
</organism>
<feature type="chain" id="PRO_0000186323" description="Mitogen-activated protein kinase homolog NTF6">
    <location>
        <begin position="1"/>
        <end position="371"/>
    </location>
</feature>
<feature type="domain" description="Protein kinase" evidence="2">
    <location>
        <begin position="38"/>
        <end position="324"/>
    </location>
</feature>
<feature type="short sequence motif" description="TXY">
    <location>
        <begin position="196"/>
        <end position="198"/>
    </location>
</feature>
<feature type="active site" description="Proton acceptor" evidence="2 3">
    <location>
        <position position="164"/>
    </location>
</feature>
<feature type="binding site" evidence="2">
    <location>
        <begin position="44"/>
        <end position="52"/>
    </location>
    <ligand>
        <name>ATP</name>
        <dbReference type="ChEBI" id="CHEBI:30616"/>
    </ligand>
</feature>
<feature type="binding site" evidence="2">
    <location>
        <position position="67"/>
    </location>
    <ligand>
        <name>ATP</name>
        <dbReference type="ChEBI" id="CHEBI:30616"/>
    </ligand>
</feature>
<feature type="modified residue" description="Phosphothreonine" evidence="1">
    <location>
        <position position="196"/>
    </location>
</feature>
<feature type="modified residue" description="Phosphotyrosine" evidence="1">
    <location>
        <position position="198"/>
    </location>
</feature>
<dbReference type="EC" id="2.7.11.24"/>
<dbReference type="EMBL" id="X83879">
    <property type="protein sequence ID" value="CAA58760.1"/>
    <property type="molecule type" value="mRNA"/>
</dbReference>
<dbReference type="PIR" id="S68189">
    <property type="entry name" value="S51320"/>
</dbReference>
<dbReference type="SMR" id="Q40531"/>
<dbReference type="STRING" id="4097.Q40531"/>
<dbReference type="PaxDb" id="4097-Q40531"/>
<dbReference type="BRENDA" id="2.7.11.24">
    <property type="organism ID" value="3645"/>
</dbReference>
<dbReference type="Proteomes" id="UP000084051">
    <property type="component" value="Unplaced"/>
</dbReference>
<dbReference type="GO" id="GO:0005737">
    <property type="term" value="C:cytoplasm"/>
    <property type="evidence" value="ECO:0000318"/>
    <property type="project" value="GO_Central"/>
</dbReference>
<dbReference type="GO" id="GO:0005634">
    <property type="term" value="C:nucleus"/>
    <property type="evidence" value="ECO:0000318"/>
    <property type="project" value="GO_Central"/>
</dbReference>
<dbReference type="GO" id="GO:0005524">
    <property type="term" value="F:ATP binding"/>
    <property type="evidence" value="ECO:0007669"/>
    <property type="project" value="UniProtKB-KW"/>
</dbReference>
<dbReference type="GO" id="GO:0004707">
    <property type="term" value="F:MAP kinase activity"/>
    <property type="evidence" value="ECO:0007669"/>
    <property type="project" value="UniProtKB-EC"/>
</dbReference>
<dbReference type="GO" id="GO:0106310">
    <property type="term" value="F:protein serine kinase activity"/>
    <property type="evidence" value="ECO:0007669"/>
    <property type="project" value="RHEA"/>
</dbReference>
<dbReference type="GO" id="GO:0004674">
    <property type="term" value="F:protein serine/threonine kinase activity"/>
    <property type="evidence" value="ECO:0000318"/>
    <property type="project" value="GO_Central"/>
</dbReference>
<dbReference type="GO" id="GO:0035556">
    <property type="term" value="P:intracellular signal transduction"/>
    <property type="evidence" value="ECO:0000318"/>
    <property type="project" value="GO_Central"/>
</dbReference>
<dbReference type="CDD" id="cd07858">
    <property type="entry name" value="STKc_TEY_MAPK"/>
    <property type="match status" value="1"/>
</dbReference>
<dbReference type="FunFam" id="1.10.510.10:FF:000013">
    <property type="entry name" value="Mitogen-activated protein kinase"/>
    <property type="match status" value="1"/>
</dbReference>
<dbReference type="FunFam" id="3.30.200.20:FF:000046">
    <property type="entry name" value="Mitogen-activated protein kinase"/>
    <property type="match status" value="1"/>
</dbReference>
<dbReference type="Gene3D" id="3.30.200.20">
    <property type="entry name" value="Phosphorylase Kinase, domain 1"/>
    <property type="match status" value="1"/>
</dbReference>
<dbReference type="Gene3D" id="1.10.510.10">
    <property type="entry name" value="Transferase(Phosphotransferase) domain 1"/>
    <property type="match status" value="1"/>
</dbReference>
<dbReference type="InterPro" id="IPR011009">
    <property type="entry name" value="Kinase-like_dom_sf"/>
</dbReference>
<dbReference type="InterPro" id="IPR050117">
    <property type="entry name" value="MAP_kinase"/>
</dbReference>
<dbReference type="InterPro" id="IPR003527">
    <property type="entry name" value="MAP_kinase_CS"/>
</dbReference>
<dbReference type="InterPro" id="IPR000719">
    <property type="entry name" value="Prot_kinase_dom"/>
</dbReference>
<dbReference type="InterPro" id="IPR017441">
    <property type="entry name" value="Protein_kinase_ATP_BS"/>
</dbReference>
<dbReference type="InterPro" id="IPR008271">
    <property type="entry name" value="Ser/Thr_kinase_AS"/>
</dbReference>
<dbReference type="PANTHER" id="PTHR24055">
    <property type="entry name" value="MITOGEN-ACTIVATED PROTEIN KINASE"/>
    <property type="match status" value="1"/>
</dbReference>
<dbReference type="Pfam" id="PF00069">
    <property type="entry name" value="Pkinase"/>
    <property type="match status" value="1"/>
</dbReference>
<dbReference type="SMART" id="SM00220">
    <property type="entry name" value="S_TKc"/>
    <property type="match status" value="1"/>
</dbReference>
<dbReference type="SUPFAM" id="SSF56112">
    <property type="entry name" value="Protein kinase-like (PK-like)"/>
    <property type="match status" value="1"/>
</dbReference>
<dbReference type="PROSITE" id="PS01351">
    <property type="entry name" value="MAPK"/>
    <property type="match status" value="1"/>
</dbReference>
<dbReference type="PROSITE" id="PS00107">
    <property type="entry name" value="PROTEIN_KINASE_ATP"/>
    <property type="match status" value="1"/>
</dbReference>
<dbReference type="PROSITE" id="PS50011">
    <property type="entry name" value="PROTEIN_KINASE_DOM"/>
    <property type="match status" value="1"/>
</dbReference>
<dbReference type="PROSITE" id="PS00108">
    <property type="entry name" value="PROTEIN_KINASE_ST"/>
    <property type="match status" value="1"/>
</dbReference>
<keyword id="KW-0067">ATP-binding</keyword>
<keyword id="KW-0418">Kinase</keyword>
<keyword id="KW-0547">Nucleotide-binding</keyword>
<keyword id="KW-0597">Phosphoprotein</keyword>
<keyword id="KW-1185">Reference proteome</keyword>
<keyword id="KW-0723">Serine/threonine-protein kinase</keyword>
<keyword id="KW-0808">Transferase</keyword>
<evidence type="ECO:0000250" key="1"/>
<evidence type="ECO:0000255" key="2">
    <source>
        <dbReference type="PROSITE-ProRule" id="PRU00159"/>
    </source>
</evidence>
<evidence type="ECO:0000255" key="3">
    <source>
        <dbReference type="PROSITE-ProRule" id="PRU10027"/>
    </source>
</evidence>
<evidence type="ECO:0000305" key="4"/>
<proteinExistence type="evidence at transcript level"/>
<gene>
    <name type="primary">NTF6</name>
</gene>
<name>NTF6_TOBAC</name>
<accession>Q40531</accession>
<comment type="catalytic activity">
    <reaction>
        <text>L-seryl-[protein] + ATP = O-phospho-L-seryl-[protein] + ADP + H(+)</text>
        <dbReference type="Rhea" id="RHEA:17989"/>
        <dbReference type="Rhea" id="RHEA-COMP:9863"/>
        <dbReference type="Rhea" id="RHEA-COMP:11604"/>
        <dbReference type="ChEBI" id="CHEBI:15378"/>
        <dbReference type="ChEBI" id="CHEBI:29999"/>
        <dbReference type="ChEBI" id="CHEBI:30616"/>
        <dbReference type="ChEBI" id="CHEBI:83421"/>
        <dbReference type="ChEBI" id="CHEBI:456216"/>
        <dbReference type="EC" id="2.7.11.24"/>
    </reaction>
</comment>
<comment type="catalytic activity">
    <reaction>
        <text>L-threonyl-[protein] + ATP = O-phospho-L-threonyl-[protein] + ADP + H(+)</text>
        <dbReference type="Rhea" id="RHEA:46608"/>
        <dbReference type="Rhea" id="RHEA-COMP:11060"/>
        <dbReference type="Rhea" id="RHEA-COMP:11605"/>
        <dbReference type="ChEBI" id="CHEBI:15378"/>
        <dbReference type="ChEBI" id="CHEBI:30013"/>
        <dbReference type="ChEBI" id="CHEBI:30616"/>
        <dbReference type="ChEBI" id="CHEBI:61977"/>
        <dbReference type="ChEBI" id="CHEBI:456216"/>
        <dbReference type="EC" id="2.7.11.24"/>
    </reaction>
</comment>
<comment type="cofactor">
    <cofactor evidence="1">
        <name>Mg(2+)</name>
        <dbReference type="ChEBI" id="CHEBI:18420"/>
    </cofactor>
</comment>
<comment type="activity regulation">
    <text evidence="1">Activated by tyrosine and threonine phosphorylation.</text>
</comment>
<comment type="domain">
    <text>The TXY motif contains the threonine and tyrosine residues whose phosphorylation activates the MAP kinases.</text>
</comment>
<comment type="PTM">
    <text evidence="1">Dually phosphorylated on Thr-196 and Tyr-198, which activates the enzyme (By similarity). Very low autophosphorylation, although dramatically increased when Mn(2+) is added to the reaction instead of Mg(2+).</text>
</comment>
<comment type="similarity">
    <text evidence="4">Belongs to the protein kinase superfamily. CMGC Ser/Thr protein kinase family. MAP kinase subfamily.</text>
</comment>
<sequence>MENETNEKLEIKGIPTHEGKYVEYNVLGNFFEVTSKYIPPIQPVGRGAYGMVCCATNSETKEEVAIKKIGNAFENRIDAKRTLREIKLLSHMDHENIIKIKDIVRPPDREEFNDVYIVYELMDTDLHQIIRSSQALTDDHCQYFLYQLLRGLKYVHSANVLHRDLKPSNLLLNANCDLKICDFGLARTTSEADFMTEYVVTRWYRAPELLLNCTEYTAAIDIWSVGCILMELIKREPLFPGRDYAQQLGLIIALLGSPEDSDLGFLRSDNARKYVKHLPRVPRHPFSQKFPDVSPLALDLAERMLVFDPAKRITVEDALNHPFLISLHEINEEPVCDSPFNFDFEQASLSEDDIKELIWNEALKFDPNTMK</sequence>
<reference key="1">
    <citation type="journal article" date="1995" name="Eur. J. Biochem.">
        <title>Molecular cloning, functional expression in Escherichia coli, and characterization of multiple mitogen-activated-protein kinases from tobacco.</title>
        <authorList>
            <person name="Wilson C."/>
            <person name="Anglmayer R."/>
            <person name="Vicente O."/>
            <person name="Heberle-Bors E."/>
        </authorList>
    </citation>
    <scope>NUCLEOTIDE SEQUENCE [MRNA]</scope>
    <source>
        <strain>cv. Petit Havana SR1</strain>
    </source>
</reference>